<evidence type="ECO:0000255" key="1">
    <source>
        <dbReference type="HAMAP-Rule" id="MF_01045"/>
    </source>
</evidence>
<comment type="function">
    <text evidence="1">Catalyzes the alpha,beta-elimination reaction of D-cysteine and of several D-cysteine derivatives. It could be a defense mechanism against D-cysteine.</text>
</comment>
<comment type="catalytic activity">
    <reaction evidence="1">
        <text>D-cysteine + H2O = hydrogen sulfide + pyruvate + NH4(+) + H(+)</text>
        <dbReference type="Rhea" id="RHEA:11268"/>
        <dbReference type="ChEBI" id="CHEBI:15361"/>
        <dbReference type="ChEBI" id="CHEBI:15377"/>
        <dbReference type="ChEBI" id="CHEBI:15378"/>
        <dbReference type="ChEBI" id="CHEBI:28938"/>
        <dbReference type="ChEBI" id="CHEBI:29919"/>
        <dbReference type="ChEBI" id="CHEBI:35236"/>
        <dbReference type="EC" id="4.4.1.15"/>
    </reaction>
</comment>
<comment type="cofactor">
    <cofactor evidence="1">
        <name>pyridoxal 5'-phosphate</name>
        <dbReference type="ChEBI" id="CHEBI:597326"/>
    </cofactor>
</comment>
<comment type="subunit">
    <text evidence="1">Homodimer.</text>
</comment>
<comment type="similarity">
    <text evidence="1">Belongs to the ACC deaminase/D-cysteine desulfhydrase family.</text>
</comment>
<protein>
    <recommendedName>
        <fullName evidence="1">D-cysteine desulfhydrase</fullName>
        <ecNumber evidence="1">4.4.1.15</ecNumber>
    </recommendedName>
</protein>
<proteinExistence type="inferred from homology"/>
<dbReference type="EC" id="4.4.1.15" evidence="1"/>
<dbReference type="EMBL" id="CP000964">
    <property type="protein sequence ID" value="ACI06739.1"/>
    <property type="molecule type" value="Genomic_DNA"/>
</dbReference>
<dbReference type="SMR" id="B5XPW3"/>
<dbReference type="KEGG" id="kpe:KPK_1864"/>
<dbReference type="HOGENOM" id="CLU_048897_1_0_6"/>
<dbReference type="Proteomes" id="UP000001734">
    <property type="component" value="Chromosome"/>
</dbReference>
<dbReference type="GO" id="GO:0019148">
    <property type="term" value="F:D-cysteine desulfhydrase activity"/>
    <property type="evidence" value="ECO:0007669"/>
    <property type="project" value="UniProtKB-UniRule"/>
</dbReference>
<dbReference type="GO" id="GO:0046416">
    <property type="term" value="P:D-amino acid metabolic process"/>
    <property type="evidence" value="ECO:0007669"/>
    <property type="project" value="UniProtKB-UniRule"/>
</dbReference>
<dbReference type="CDD" id="cd06449">
    <property type="entry name" value="ACCD"/>
    <property type="match status" value="1"/>
</dbReference>
<dbReference type="FunFam" id="3.40.50.1100:FF:000017">
    <property type="entry name" value="D-cysteine desulfhydrase"/>
    <property type="match status" value="1"/>
</dbReference>
<dbReference type="Gene3D" id="3.40.50.1100">
    <property type="match status" value="2"/>
</dbReference>
<dbReference type="HAMAP" id="MF_01045">
    <property type="entry name" value="D_Cys_desulfhydr"/>
    <property type="match status" value="1"/>
</dbReference>
<dbReference type="InterPro" id="IPR027278">
    <property type="entry name" value="ACCD_DCysDesulf"/>
</dbReference>
<dbReference type="InterPro" id="IPR005966">
    <property type="entry name" value="D-Cys_desShydrase"/>
</dbReference>
<dbReference type="InterPro" id="IPR023702">
    <property type="entry name" value="D_Cys_desulphydr_bac"/>
</dbReference>
<dbReference type="InterPro" id="IPR001926">
    <property type="entry name" value="TrpB-like_PALP"/>
</dbReference>
<dbReference type="InterPro" id="IPR036052">
    <property type="entry name" value="TrpB-like_PALP_sf"/>
</dbReference>
<dbReference type="NCBIfam" id="TIGR01275">
    <property type="entry name" value="ACC_deam_rel"/>
    <property type="match status" value="1"/>
</dbReference>
<dbReference type="NCBIfam" id="NF003029">
    <property type="entry name" value="PRK03910.1-1"/>
    <property type="match status" value="1"/>
</dbReference>
<dbReference type="NCBIfam" id="NF003030">
    <property type="entry name" value="PRK03910.1-3"/>
    <property type="match status" value="1"/>
</dbReference>
<dbReference type="NCBIfam" id="NF003032">
    <property type="entry name" value="PRK03910.1-5"/>
    <property type="match status" value="1"/>
</dbReference>
<dbReference type="PANTHER" id="PTHR43780">
    <property type="entry name" value="1-AMINOCYCLOPROPANE-1-CARBOXYLATE DEAMINASE-RELATED"/>
    <property type="match status" value="1"/>
</dbReference>
<dbReference type="PANTHER" id="PTHR43780:SF2">
    <property type="entry name" value="1-AMINOCYCLOPROPANE-1-CARBOXYLATE DEAMINASE-RELATED"/>
    <property type="match status" value="1"/>
</dbReference>
<dbReference type="Pfam" id="PF00291">
    <property type="entry name" value="PALP"/>
    <property type="match status" value="1"/>
</dbReference>
<dbReference type="PIRSF" id="PIRSF006278">
    <property type="entry name" value="ACCD_DCysDesulf"/>
    <property type="match status" value="1"/>
</dbReference>
<dbReference type="SUPFAM" id="SSF53686">
    <property type="entry name" value="Tryptophan synthase beta subunit-like PLP-dependent enzymes"/>
    <property type="match status" value="1"/>
</dbReference>
<name>DCYD_KLEP3</name>
<gene>
    <name evidence="1" type="primary">dcyD</name>
    <name type="ordered locus">KPK_1864</name>
</gene>
<feature type="chain" id="PRO_1000136164" description="D-cysteine desulfhydrase">
    <location>
        <begin position="1"/>
        <end position="328"/>
    </location>
</feature>
<feature type="modified residue" description="N6-(pyridoxal phosphate)lysine" evidence="1">
    <location>
        <position position="51"/>
    </location>
</feature>
<organism>
    <name type="scientific">Klebsiella pneumoniae (strain 342)</name>
    <dbReference type="NCBI Taxonomy" id="507522"/>
    <lineage>
        <taxon>Bacteria</taxon>
        <taxon>Pseudomonadati</taxon>
        <taxon>Pseudomonadota</taxon>
        <taxon>Gammaproteobacteria</taxon>
        <taxon>Enterobacterales</taxon>
        <taxon>Enterobacteriaceae</taxon>
        <taxon>Klebsiella/Raoultella group</taxon>
        <taxon>Klebsiella</taxon>
        <taxon>Klebsiella pneumoniae complex</taxon>
    </lineage>
</organism>
<reference key="1">
    <citation type="journal article" date="2008" name="PLoS Genet.">
        <title>Complete genome sequence of the N2-fixing broad host range endophyte Klebsiella pneumoniae 342 and virulence predictions verified in mice.</title>
        <authorList>
            <person name="Fouts D.E."/>
            <person name="Tyler H.L."/>
            <person name="DeBoy R.T."/>
            <person name="Daugherty S."/>
            <person name="Ren Q."/>
            <person name="Badger J.H."/>
            <person name="Durkin A.S."/>
            <person name="Huot H."/>
            <person name="Shrivastava S."/>
            <person name="Kothari S."/>
            <person name="Dodson R.J."/>
            <person name="Mohamoud Y."/>
            <person name="Khouri H."/>
            <person name="Roesch L.F.W."/>
            <person name="Krogfelt K.A."/>
            <person name="Struve C."/>
            <person name="Triplett E.W."/>
            <person name="Methe B.A."/>
        </authorList>
    </citation>
    <scope>NUCLEOTIDE SEQUENCE [LARGE SCALE GENOMIC DNA]</scope>
    <source>
        <strain>342</strain>
    </source>
</reference>
<keyword id="KW-0456">Lyase</keyword>
<keyword id="KW-0663">Pyridoxal phosphate</keyword>
<accession>B5XPW3</accession>
<sequence>MSLQNLTRFPRLELIGAPTPLEYLPRLSDHLGREIFIKRDDTTPLAMGGNKLRKLEFLAADALREGADTLITAGAIQSNHVRQTAAVAAKLGLHCVALLENPIGTGAENYLSNGNRLLLDLFNTQVEMCDALTNPAEQLDELATRIEAQGYRPYVIPVGGSNALGALGYVESALEIAQQCEGAVEISSVVVASGSAGTHAGLAVGLEQLMPQAELIGVTVSRSVADQLPKVVALQQAVANSLELQAKADITLWDDYFAPGYGTPNEEGMAAVKLLAQLEGILLDPVYTGKAMAGLIDGITQKRFKDEGPILFVHTGGAPALFAYHPHL</sequence>